<evidence type="ECO:0000250" key="1"/>
<evidence type="ECO:0000256" key="2">
    <source>
        <dbReference type="SAM" id="MobiDB-lite"/>
    </source>
</evidence>
<evidence type="ECO:0000305" key="3"/>
<reference key="1">
    <citation type="journal article" date="2002" name="Nature">
        <title>The genome sequence of Schizosaccharomyces pombe.</title>
        <authorList>
            <person name="Wood V."/>
            <person name="Gwilliam R."/>
            <person name="Rajandream M.A."/>
            <person name="Lyne M.H."/>
            <person name="Lyne R."/>
            <person name="Stewart A."/>
            <person name="Sgouros J.G."/>
            <person name="Peat N."/>
            <person name="Hayles J."/>
            <person name="Baker S.G."/>
            <person name="Basham D."/>
            <person name="Bowman S."/>
            <person name="Brooks K."/>
            <person name="Brown D."/>
            <person name="Brown S."/>
            <person name="Chillingworth T."/>
            <person name="Churcher C.M."/>
            <person name="Collins M."/>
            <person name="Connor R."/>
            <person name="Cronin A."/>
            <person name="Davis P."/>
            <person name="Feltwell T."/>
            <person name="Fraser A."/>
            <person name="Gentles S."/>
            <person name="Goble A."/>
            <person name="Hamlin N."/>
            <person name="Harris D.E."/>
            <person name="Hidalgo J."/>
            <person name="Hodgson G."/>
            <person name="Holroyd S."/>
            <person name="Hornsby T."/>
            <person name="Howarth S."/>
            <person name="Huckle E.J."/>
            <person name="Hunt S."/>
            <person name="Jagels K."/>
            <person name="James K.D."/>
            <person name="Jones L."/>
            <person name="Jones M."/>
            <person name="Leather S."/>
            <person name="McDonald S."/>
            <person name="McLean J."/>
            <person name="Mooney P."/>
            <person name="Moule S."/>
            <person name="Mungall K.L."/>
            <person name="Murphy L.D."/>
            <person name="Niblett D."/>
            <person name="Odell C."/>
            <person name="Oliver K."/>
            <person name="O'Neil S."/>
            <person name="Pearson D."/>
            <person name="Quail M.A."/>
            <person name="Rabbinowitsch E."/>
            <person name="Rutherford K.M."/>
            <person name="Rutter S."/>
            <person name="Saunders D."/>
            <person name="Seeger K."/>
            <person name="Sharp S."/>
            <person name="Skelton J."/>
            <person name="Simmonds M.N."/>
            <person name="Squares R."/>
            <person name="Squares S."/>
            <person name="Stevens K."/>
            <person name="Taylor K."/>
            <person name="Taylor R.G."/>
            <person name="Tivey A."/>
            <person name="Walsh S.V."/>
            <person name="Warren T."/>
            <person name="Whitehead S."/>
            <person name="Woodward J.R."/>
            <person name="Volckaert G."/>
            <person name="Aert R."/>
            <person name="Robben J."/>
            <person name="Grymonprez B."/>
            <person name="Weltjens I."/>
            <person name="Vanstreels E."/>
            <person name="Rieger M."/>
            <person name="Schaefer M."/>
            <person name="Mueller-Auer S."/>
            <person name="Gabel C."/>
            <person name="Fuchs M."/>
            <person name="Duesterhoeft A."/>
            <person name="Fritzc C."/>
            <person name="Holzer E."/>
            <person name="Moestl D."/>
            <person name="Hilbert H."/>
            <person name="Borzym K."/>
            <person name="Langer I."/>
            <person name="Beck A."/>
            <person name="Lehrach H."/>
            <person name="Reinhardt R."/>
            <person name="Pohl T.M."/>
            <person name="Eger P."/>
            <person name="Zimmermann W."/>
            <person name="Wedler H."/>
            <person name="Wambutt R."/>
            <person name="Purnelle B."/>
            <person name="Goffeau A."/>
            <person name="Cadieu E."/>
            <person name="Dreano S."/>
            <person name="Gloux S."/>
            <person name="Lelaure V."/>
            <person name="Mottier S."/>
            <person name="Galibert F."/>
            <person name="Aves S.J."/>
            <person name="Xiang Z."/>
            <person name="Hunt C."/>
            <person name="Moore K."/>
            <person name="Hurst S.M."/>
            <person name="Lucas M."/>
            <person name="Rochet M."/>
            <person name="Gaillardin C."/>
            <person name="Tallada V.A."/>
            <person name="Garzon A."/>
            <person name="Thode G."/>
            <person name="Daga R.R."/>
            <person name="Cruzado L."/>
            <person name="Jimenez J."/>
            <person name="Sanchez M."/>
            <person name="del Rey F."/>
            <person name="Benito J."/>
            <person name="Dominguez A."/>
            <person name="Revuelta J.L."/>
            <person name="Moreno S."/>
            <person name="Armstrong J."/>
            <person name="Forsburg S.L."/>
            <person name="Cerutti L."/>
            <person name="Lowe T."/>
            <person name="McCombie W.R."/>
            <person name="Paulsen I."/>
            <person name="Potashkin J."/>
            <person name="Shpakovski G.V."/>
            <person name="Ussery D."/>
            <person name="Barrell B.G."/>
            <person name="Nurse P."/>
        </authorList>
    </citation>
    <scope>NUCLEOTIDE SEQUENCE [LARGE SCALE GENOMIC DNA]</scope>
    <source>
        <strain>972 / ATCC 24843</strain>
    </source>
</reference>
<keyword id="KW-0131">Cell cycle</keyword>
<keyword id="KW-0227">DNA damage</keyword>
<keyword id="KW-0234">DNA repair</keyword>
<keyword id="KW-0539">Nucleus</keyword>
<keyword id="KW-1185">Reference proteome</keyword>
<keyword id="KW-0804">Transcription</keyword>
<keyword id="KW-0805">Transcription regulation</keyword>
<protein>
    <recommendedName>
        <fullName>Enhancer of polycomb-like protein 1</fullName>
    </recommendedName>
</protein>
<accession>Q9UU94</accession>
<feature type="chain" id="PRO_0000214165" description="Enhancer of polycomb-like protein 1">
    <location>
        <begin position="1"/>
        <end position="557"/>
    </location>
</feature>
<feature type="region of interest" description="Disordered" evidence="2">
    <location>
        <begin position="323"/>
        <end position="349"/>
    </location>
</feature>
<feature type="region of interest" description="Disordered" evidence="2">
    <location>
        <begin position="424"/>
        <end position="449"/>
    </location>
</feature>
<feature type="compositionally biased region" description="Pro residues" evidence="2">
    <location>
        <begin position="327"/>
        <end position="337"/>
    </location>
</feature>
<feature type="compositionally biased region" description="Low complexity" evidence="2">
    <location>
        <begin position="429"/>
        <end position="441"/>
    </location>
</feature>
<dbReference type="EMBL" id="CU329672">
    <property type="protein sequence ID" value="CAB52878.1"/>
    <property type="molecule type" value="Genomic_DNA"/>
</dbReference>
<dbReference type="PIR" id="T41631">
    <property type="entry name" value="T41631"/>
</dbReference>
<dbReference type="RefSeq" id="NP_588475.1">
    <property type="nucleotide sequence ID" value="NM_001023466.2"/>
</dbReference>
<dbReference type="SMR" id="Q9UU94"/>
<dbReference type="BioGRID" id="275993">
    <property type="interactions" value="12"/>
</dbReference>
<dbReference type="FunCoup" id="Q9UU94">
    <property type="interactions" value="398"/>
</dbReference>
<dbReference type="IntAct" id="Q9UU94">
    <property type="interactions" value="2"/>
</dbReference>
<dbReference type="MINT" id="Q9UU94"/>
<dbReference type="STRING" id="284812.Q9UU94"/>
<dbReference type="iPTMnet" id="Q9UU94"/>
<dbReference type="PaxDb" id="4896-SPCC830.05c.1"/>
<dbReference type="EnsemblFungi" id="SPCC830.05c.1">
    <property type="protein sequence ID" value="SPCC830.05c.1:pep"/>
    <property type="gene ID" value="SPCC830.05c"/>
</dbReference>
<dbReference type="GeneID" id="2539428"/>
<dbReference type="KEGG" id="spo:2539428"/>
<dbReference type="PomBase" id="SPCC830.05c">
    <property type="gene designation" value="epl1"/>
</dbReference>
<dbReference type="VEuPathDB" id="FungiDB:SPCC830.05c"/>
<dbReference type="eggNOG" id="KOG2261">
    <property type="taxonomic scope" value="Eukaryota"/>
</dbReference>
<dbReference type="HOGENOM" id="CLU_010580_1_0_1"/>
<dbReference type="InParanoid" id="Q9UU94"/>
<dbReference type="OMA" id="HIKWNEG"/>
<dbReference type="PhylomeDB" id="Q9UU94"/>
<dbReference type="PRO" id="PR:Q9UU94"/>
<dbReference type="Proteomes" id="UP000002485">
    <property type="component" value="Chromosome III"/>
</dbReference>
<dbReference type="GO" id="GO:0035267">
    <property type="term" value="C:NuA4 histone acetyltransferase complex"/>
    <property type="evidence" value="ECO:0000314"/>
    <property type="project" value="PomBase"/>
</dbReference>
<dbReference type="GO" id="GO:0005634">
    <property type="term" value="C:nucleus"/>
    <property type="evidence" value="ECO:0007005"/>
    <property type="project" value="PomBase"/>
</dbReference>
<dbReference type="GO" id="GO:0032777">
    <property type="term" value="C:piccolo histone acetyltransferase complex"/>
    <property type="evidence" value="ECO:0000318"/>
    <property type="project" value="GO_Central"/>
</dbReference>
<dbReference type="GO" id="GO:0030674">
    <property type="term" value="F:protein-macromolecule adaptor activity"/>
    <property type="evidence" value="ECO:0000269"/>
    <property type="project" value="PomBase"/>
</dbReference>
<dbReference type="GO" id="GO:0006281">
    <property type="term" value="P:DNA repair"/>
    <property type="evidence" value="ECO:0007669"/>
    <property type="project" value="UniProtKB-KW"/>
</dbReference>
<dbReference type="GO" id="GO:0140861">
    <property type="term" value="P:DNA repair-dependent chromatin remodeling"/>
    <property type="evidence" value="ECO:0000305"/>
    <property type="project" value="PomBase"/>
</dbReference>
<dbReference type="GO" id="GO:0006357">
    <property type="term" value="P:regulation of transcription by RNA polymerase II"/>
    <property type="evidence" value="ECO:0000318"/>
    <property type="project" value="GO_Central"/>
</dbReference>
<dbReference type="InterPro" id="IPR024943">
    <property type="entry name" value="Enhancer_polycomb"/>
</dbReference>
<dbReference type="InterPro" id="IPR019542">
    <property type="entry name" value="Enhancer_polycomb-like_N"/>
</dbReference>
<dbReference type="PANTHER" id="PTHR14898">
    <property type="entry name" value="ENHANCER OF POLYCOMB"/>
    <property type="match status" value="1"/>
</dbReference>
<dbReference type="Pfam" id="PF10513">
    <property type="entry name" value="EPL1"/>
    <property type="match status" value="1"/>
</dbReference>
<gene>
    <name type="primary">epl1</name>
    <name type="ORF">SPCC830.05c</name>
</gene>
<comment type="function">
    <text evidence="1">Component of the NuA4 histone acetyltransferase complex which is involved in transcriptional activation of selected genes principally by acetylation of nucleosomal histone H4 and H2A. The NuA4 complex is also involved in DNA repair. Involved in gene silencing by neighboring heterochromatin, blockage of the silencing spreading along the chromosome, and required for cell cycle progression through G2/M (By similarity).</text>
</comment>
<comment type="subunit">
    <text evidence="1">Component of the NuA4 histone acetyltransferase complex.</text>
</comment>
<comment type="subcellular location">
    <subcellularLocation>
        <location evidence="1">Nucleus</location>
    </subcellularLocation>
</comment>
<comment type="similarity">
    <text evidence="3">Belongs to the enhancer of polycomb family.</text>
</comment>
<organism>
    <name type="scientific">Schizosaccharomyces pombe (strain 972 / ATCC 24843)</name>
    <name type="common">Fission yeast</name>
    <dbReference type="NCBI Taxonomy" id="284812"/>
    <lineage>
        <taxon>Eukaryota</taxon>
        <taxon>Fungi</taxon>
        <taxon>Dikarya</taxon>
        <taxon>Ascomycota</taxon>
        <taxon>Taphrinomycotina</taxon>
        <taxon>Schizosaccharomycetes</taxon>
        <taxon>Schizosaccharomycetales</taxon>
        <taxon>Schizosaccharomycetaceae</taxon>
        <taxon>Schizosaccharomyces</taxon>
    </lineage>
</organism>
<proteinExistence type="inferred from homology"/>
<name>EPL1_SCHPO</name>
<sequence length="557" mass="64628">MSSVSKNARAYRQRKVGIKTVMPIYFERDIPDFDEEASLQRTVPLVESGVEKEEEEEKHLQQVINEAHEAIVRGSEKKLIIPTREAKNIGIIDKYYKKNFILPKTLIRFSLTVEECTNPEYCMDEHDTEYFLKLKQAQPSLSKFSELDFEIVMQTFEEEINQNQPFLSMDTSQILPLSELITSFELKDVLYLKPLASQVYPYWRERRISKGGLPIMAKAQVGDDKDDDDPYVCFRRREIRQARKTRRSDAQSYDRLRRLRQSMETSLQLLEQVYKREQKKLQALEDDYAIFQKRCLVKKLKRTLNIKDSDELLINPKRRPIEVKPAAPVPTPAPPVKTSPHPASYRPQPTRNVEVRPLLMLDDVQSAQITQFQIRLQQRLTKKEQLDRNWVDLLETPSTVIHTNYPDSFYRNIIPYYSGKETKQSHNQLSIPSSTPSTPLSDNGPTYSTPHSSLSNFNTCDSLSFSSNNSLYGYSTLLHPRNPICVRQRIGRGGRLMLDRTRALPVHRLSKPKSRVEDRWLFDIPFDADDTIILDDESDASIMFRASLLNDDMGTQS</sequence>